<proteinExistence type="inferred from homology"/>
<gene>
    <name evidence="1" type="primary">gloB</name>
    <name type="ordered locus">gll3339</name>
</gene>
<comment type="function">
    <text evidence="1">Thiolesterase that catalyzes the hydrolysis of S-D-lactoyl-glutathione to form glutathione and D-lactic acid.</text>
</comment>
<comment type="catalytic activity">
    <reaction evidence="1">
        <text>an S-(2-hydroxyacyl)glutathione + H2O = a 2-hydroxy carboxylate + glutathione + H(+)</text>
        <dbReference type="Rhea" id="RHEA:21864"/>
        <dbReference type="ChEBI" id="CHEBI:15377"/>
        <dbReference type="ChEBI" id="CHEBI:15378"/>
        <dbReference type="ChEBI" id="CHEBI:57925"/>
        <dbReference type="ChEBI" id="CHEBI:58896"/>
        <dbReference type="ChEBI" id="CHEBI:71261"/>
        <dbReference type="EC" id="3.1.2.6"/>
    </reaction>
</comment>
<comment type="cofactor">
    <cofactor evidence="1">
        <name>Zn(2+)</name>
        <dbReference type="ChEBI" id="CHEBI:29105"/>
    </cofactor>
    <text evidence="1">Binds 2 Zn(2+) ions per subunit.</text>
</comment>
<comment type="pathway">
    <text evidence="1">Secondary metabolite metabolism; methylglyoxal degradation; (R)-lactate from methylglyoxal: step 2/2.</text>
</comment>
<comment type="subunit">
    <text evidence="1">Monomer.</text>
</comment>
<comment type="similarity">
    <text evidence="1">Belongs to the metallo-beta-lactamase superfamily. Glyoxalase II family.</text>
</comment>
<accession>Q7NG34</accession>
<evidence type="ECO:0000255" key="1">
    <source>
        <dbReference type="HAMAP-Rule" id="MF_01374"/>
    </source>
</evidence>
<reference key="1">
    <citation type="journal article" date="2003" name="DNA Res.">
        <title>Complete genome structure of Gloeobacter violaceus PCC 7421, a cyanobacterium that lacks thylakoids.</title>
        <authorList>
            <person name="Nakamura Y."/>
            <person name="Kaneko T."/>
            <person name="Sato S."/>
            <person name="Mimuro M."/>
            <person name="Miyashita H."/>
            <person name="Tsuchiya T."/>
            <person name="Sasamoto S."/>
            <person name="Watanabe A."/>
            <person name="Kawashima K."/>
            <person name="Kishida Y."/>
            <person name="Kiyokawa C."/>
            <person name="Kohara M."/>
            <person name="Matsumoto M."/>
            <person name="Matsuno A."/>
            <person name="Nakazaki N."/>
            <person name="Shimpo S."/>
            <person name="Takeuchi C."/>
            <person name="Yamada M."/>
            <person name="Tabata S."/>
        </authorList>
    </citation>
    <scope>NUCLEOTIDE SEQUENCE [LARGE SCALE GENOMIC DNA]</scope>
    <source>
        <strain>ATCC 29082 / PCC 7421</strain>
    </source>
</reference>
<dbReference type="EC" id="3.1.2.6" evidence="1"/>
<dbReference type="EMBL" id="BA000045">
    <property type="protein sequence ID" value="BAC91280.1"/>
    <property type="molecule type" value="Genomic_DNA"/>
</dbReference>
<dbReference type="RefSeq" id="NP_926285.1">
    <property type="nucleotide sequence ID" value="NC_005125.1"/>
</dbReference>
<dbReference type="RefSeq" id="WP_011143329.1">
    <property type="nucleotide sequence ID" value="NC_005125.1"/>
</dbReference>
<dbReference type="SMR" id="Q7NG34"/>
<dbReference type="FunCoup" id="Q7NG34">
    <property type="interactions" value="260"/>
</dbReference>
<dbReference type="STRING" id="251221.gene:10760850"/>
<dbReference type="EnsemblBacteria" id="BAC91280">
    <property type="protein sequence ID" value="BAC91280"/>
    <property type="gene ID" value="BAC91280"/>
</dbReference>
<dbReference type="KEGG" id="gvi:gll3339"/>
<dbReference type="PATRIC" id="fig|251221.4.peg.3370"/>
<dbReference type="eggNOG" id="COG0491">
    <property type="taxonomic scope" value="Bacteria"/>
</dbReference>
<dbReference type="HOGENOM" id="CLU_030571_4_1_3"/>
<dbReference type="InParanoid" id="Q7NG34"/>
<dbReference type="OrthoDB" id="9802897at2"/>
<dbReference type="PhylomeDB" id="Q7NG34"/>
<dbReference type="UniPathway" id="UPA00619">
    <property type="reaction ID" value="UER00676"/>
</dbReference>
<dbReference type="Proteomes" id="UP000000557">
    <property type="component" value="Chromosome"/>
</dbReference>
<dbReference type="GO" id="GO:0004416">
    <property type="term" value="F:hydroxyacylglutathione hydrolase activity"/>
    <property type="evidence" value="ECO:0007669"/>
    <property type="project" value="UniProtKB-UniRule"/>
</dbReference>
<dbReference type="GO" id="GO:0046872">
    <property type="term" value="F:metal ion binding"/>
    <property type="evidence" value="ECO:0007669"/>
    <property type="project" value="UniProtKB-KW"/>
</dbReference>
<dbReference type="GO" id="GO:0019243">
    <property type="term" value="P:methylglyoxal catabolic process to D-lactate via S-lactoyl-glutathione"/>
    <property type="evidence" value="ECO:0007669"/>
    <property type="project" value="InterPro"/>
</dbReference>
<dbReference type="CDD" id="cd07723">
    <property type="entry name" value="hydroxyacylglutathione_hydrolase_MBL-fold"/>
    <property type="match status" value="1"/>
</dbReference>
<dbReference type="Gene3D" id="3.60.15.10">
    <property type="entry name" value="Ribonuclease Z/Hydroxyacylglutathione hydrolase-like"/>
    <property type="match status" value="1"/>
</dbReference>
<dbReference type="HAMAP" id="MF_01374">
    <property type="entry name" value="Glyoxalase_2"/>
    <property type="match status" value="1"/>
</dbReference>
<dbReference type="InterPro" id="IPR035680">
    <property type="entry name" value="Clx_II_MBL"/>
</dbReference>
<dbReference type="InterPro" id="IPR050110">
    <property type="entry name" value="Glyoxalase_II_hydrolase"/>
</dbReference>
<dbReference type="InterPro" id="IPR032282">
    <property type="entry name" value="HAGH_C"/>
</dbReference>
<dbReference type="InterPro" id="IPR017782">
    <property type="entry name" value="Hydroxyacylglutathione_Hdrlase"/>
</dbReference>
<dbReference type="InterPro" id="IPR001279">
    <property type="entry name" value="Metallo-B-lactamas"/>
</dbReference>
<dbReference type="InterPro" id="IPR036866">
    <property type="entry name" value="RibonucZ/Hydroxyglut_hydro"/>
</dbReference>
<dbReference type="NCBIfam" id="TIGR03413">
    <property type="entry name" value="GSH_gloB"/>
    <property type="match status" value="1"/>
</dbReference>
<dbReference type="PANTHER" id="PTHR43705">
    <property type="entry name" value="HYDROXYACYLGLUTATHIONE HYDROLASE"/>
    <property type="match status" value="1"/>
</dbReference>
<dbReference type="PANTHER" id="PTHR43705:SF1">
    <property type="entry name" value="HYDROXYACYLGLUTATHIONE HYDROLASE GLOB"/>
    <property type="match status" value="1"/>
</dbReference>
<dbReference type="Pfam" id="PF16123">
    <property type="entry name" value="HAGH_C"/>
    <property type="match status" value="1"/>
</dbReference>
<dbReference type="Pfam" id="PF00753">
    <property type="entry name" value="Lactamase_B"/>
    <property type="match status" value="1"/>
</dbReference>
<dbReference type="PIRSF" id="PIRSF005457">
    <property type="entry name" value="Glx"/>
    <property type="match status" value="1"/>
</dbReference>
<dbReference type="SMART" id="SM00849">
    <property type="entry name" value="Lactamase_B"/>
    <property type="match status" value="1"/>
</dbReference>
<dbReference type="SUPFAM" id="SSF56281">
    <property type="entry name" value="Metallo-hydrolase/oxidoreductase"/>
    <property type="match status" value="1"/>
</dbReference>
<keyword id="KW-0378">Hydrolase</keyword>
<keyword id="KW-0479">Metal-binding</keyword>
<keyword id="KW-1185">Reference proteome</keyword>
<keyword id="KW-0862">Zinc</keyword>
<name>GLO2_GLOVI</name>
<protein>
    <recommendedName>
        <fullName evidence="1">Hydroxyacylglutathione hydrolase</fullName>
        <ecNumber evidence="1">3.1.2.6</ecNumber>
    </recommendedName>
    <alternativeName>
        <fullName evidence="1">Glyoxalase II</fullName>
        <shortName evidence="1">Glx II</shortName>
    </alternativeName>
</protein>
<sequence length="252" mass="28123">MLVHRLNALKDNYVFVLEDEAARTAAVVDPAEARPVLEALVRLGLKLVAIFNTHHHHDHVGGNRELLEAYPGIAVYASRRDRGRIPGQTVELEDGDTVAFGCERARVIFVPGHTHGHIAYHFAGCGHLFCGDTLFAGGCGRLFEGTARQMQHSLGRLRELPGETQVWCAHEYTLGNLRFAHTLEPDNAELAERLRTVEVLRARKIATVPSTMAAERATNPFLRWESRQLQRAAGAIEPEEVFAHLRALKDRF</sequence>
<organism>
    <name type="scientific">Gloeobacter violaceus (strain ATCC 29082 / PCC 7421)</name>
    <dbReference type="NCBI Taxonomy" id="251221"/>
    <lineage>
        <taxon>Bacteria</taxon>
        <taxon>Bacillati</taxon>
        <taxon>Cyanobacteriota</taxon>
        <taxon>Cyanophyceae</taxon>
        <taxon>Gloeobacterales</taxon>
        <taxon>Gloeobacteraceae</taxon>
        <taxon>Gloeobacter</taxon>
    </lineage>
</organism>
<feature type="chain" id="PRO_1000068218" description="Hydroxyacylglutathione hydrolase">
    <location>
        <begin position="1"/>
        <end position="252"/>
    </location>
</feature>
<feature type="binding site" evidence="1">
    <location>
        <position position="54"/>
    </location>
    <ligand>
        <name>Zn(2+)</name>
        <dbReference type="ChEBI" id="CHEBI:29105"/>
        <label>1</label>
    </ligand>
</feature>
<feature type="binding site" evidence="1">
    <location>
        <position position="56"/>
    </location>
    <ligand>
        <name>Zn(2+)</name>
        <dbReference type="ChEBI" id="CHEBI:29105"/>
        <label>1</label>
    </ligand>
</feature>
<feature type="binding site" evidence="1">
    <location>
        <position position="58"/>
    </location>
    <ligand>
        <name>Zn(2+)</name>
        <dbReference type="ChEBI" id="CHEBI:29105"/>
        <label>2</label>
    </ligand>
</feature>
<feature type="binding site" evidence="1">
    <location>
        <position position="59"/>
    </location>
    <ligand>
        <name>Zn(2+)</name>
        <dbReference type="ChEBI" id="CHEBI:29105"/>
        <label>2</label>
    </ligand>
</feature>
<feature type="binding site" evidence="1">
    <location>
        <position position="113"/>
    </location>
    <ligand>
        <name>Zn(2+)</name>
        <dbReference type="ChEBI" id="CHEBI:29105"/>
        <label>1</label>
    </ligand>
</feature>
<feature type="binding site" evidence="1">
    <location>
        <position position="132"/>
    </location>
    <ligand>
        <name>Zn(2+)</name>
        <dbReference type="ChEBI" id="CHEBI:29105"/>
        <label>1</label>
    </ligand>
</feature>
<feature type="binding site" evidence="1">
    <location>
        <position position="132"/>
    </location>
    <ligand>
        <name>Zn(2+)</name>
        <dbReference type="ChEBI" id="CHEBI:29105"/>
        <label>2</label>
    </ligand>
</feature>
<feature type="binding site" evidence="1">
    <location>
        <position position="170"/>
    </location>
    <ligand>
        <name>Zn(2+)</name>
        <dbReference type="ChEBI" id="CHEBI:29105"/>
        <label>2</label>
    </ligand>
</feature>